<dbReference type="EMBL" id="AY368152">
    <property type="protein sequence ID" value="AAR13399.1"/>
    <property type="molecule type" value="mRNA"/>
</dbReference>
<dbReference type="RefSeq" id="NP_001002960.1">
    <property type="nucleotide sequence ID" value="NM_001002960.1"/>
</dbReference>
<dbReference type="SMR" id="Q6UKI2"/>
<dbReference type="FunCoup" id="Q6UKI2">
    <property type="interactions" value="4"/>
</dbReference>
<dbReference type="GlyCosmos" id="Q6UKI2">
    <property type="glycosylation" value="1 site, No reported glycans"/>
</dbReference>
<dbReference type="GeneID" id="403434"/>
<dbReference type="KEGG" id="cfa:403434"/>
<dbReference type="CTD" id="81693"/>
<dbReference type="InParanoid" id="Q6UKI2"/>
<dbReference type="OrthoDB" id="10067964at2759"/>
<dbReference type="Proteomes" id="UP000002254">
    <property type="component" value="Unplaced"/>
</dbReference>
<dbReference type="Proteomes" id="UP000694429">
    <property type="component" value="Unplaced"/>
</dbReference>
<dbReference type="Proteomes" id="UP000694542">
    <property type="component" value="Unplaced"/>
</dbReference>
<dbReference type="Proteomes" id="UP000805418">
    <property type="component" value="Unplaced"/>
</dbReference>
<dbReference type="GO" id="GO:0016324">
    <property type="term" value="C:apical plasma membrane"/>
    <property type="evidence" value="ECO:0000315"/>
    <property type="project" value="CACAO"/>
</dbReference>
<dbReference type="GO" id="GO:0005905">
    <property type="term" value="C:clathrin-coated pit"/>
    <property type="evidence" value="ECO:0007669"/>
    <property type="project" value="UniProtKB-KW"/>
</dbReference>
<dbReference type="GO" id="GO:0030139">
    <property type="term" value="C:endocytic vesicle"/>
    <property type="evidence" value="ECO:0000318"/>
    <property type="project" value="GO_Central"/>
</dbReference>
<dbReference type="GO" id="GO:0010008">
    <property type="term" value="C:endosome membrane"/>
    <property type="evidence" value="ECO:0007669"/>
    <property type="project" value="UniProtKB-SubCell"/>
</dbReference>
<dbReference type="GO" id="GO:0005576">
    <property type="term" value="C:extracellular region"/>
    <property type="evidence" value="ECO:0007669"/>
    <property type="project" value="UniProtKB-SubCell"/>
</dbReference>
<dbReference type="GO" id="GO:0008104">
    <property type="term" value="P:protein localization"/>
    <property type="evidence" value="ECO:0000318"/>
    <property type="project" value="GO_Central"/>
</dbReference>
<dbReference type="GO" id="GO:0015031">
    <property type="term" value="P:protein transport"/>
    <property type="evidence" value="ECO:0007669"/>
    <property type="project" value="UniProtKB-KW"/>
</dbReference>
<dbReference type="GO" id="GO:0006898">
    <property type="term" value="P:receptor-mediated endocytosis"/>
    <property type="evidence" value="ECO:0000318"/>
    <property type="project" value="GO_Central"/>
</dbReference>
<dbReference type="InterPro" id="IPR026112">
    <property type="entry name" value="AMN"/>
</dbReference>
<dbReference type="PANTHER" id="PTHR14995">
    <property type="entry name" value="AMNIONLESS"/>
    <property type="match status" value="1"/>
</dbReference>
<dbReference type="PANTHER" id="PTHR14995:SF2">
    <property type="entry name" value="PROTEIN AMNIONLESS"/>
    <property type="match status" value="1"/>
</dbReference>
<dbReference type="Pfam" id="PF14828">
    <property type="entry name" value="Amnionless"/>
    <property type="match status" value="1"/>
</dbReference>
<organism>
    <name type="scientific">Canis lupus familiaris</name>
    <name type="common">Dog</name>
    <name type="synonym">Canis familiaris</name>
    <dbReference type="NCBI Taxonomy" id="9615"/>
    <lineage>
        <taxon>Eukaryota</taxon>
        <taxon>Metazoa</taxon>
        <taxon>Chordata</taxon>
        <taxon>Craniata</taxon>
        <taxon>Vertebrata</taxon>
        <taxon>Euteleostomi</taxon>
        <taxon>Mammalia</taxon>
        <taxon>Eutheria</taxon>
        <taxon>Laurasiatheria</taxon>
        <taxon>Carnivora</taxon>
        <taxon>Caniformia</taxon>
        <taxon>Canidae</taxon>
        <taxon>Canis</taxon>
    </lineage>
</organism>
<evidence type="ECO:0000250" key="1">
    <source>
        <dbReference type="UniProtKB" id="F1SAM7"/>
    </source>
</evidence>
<evidence type="ECO:0000250" key="2">
    <source>
        <dbReference type="UniProtKB" id="Q9BXJ7"/>
    </source>
</evidence>
<evidence type="ECO:0000255" key="3"/>
<evidence type="ECO:0000256" key="4">
    <source>
        <dbReference type="SAM" id="MobiDB-lite"/>
    </source>
</evidence>
<evidence type="ECO:0000269" key="5">
    <source>
    </source>
</evidence>
<evidence type="ECO:0000305" key="6"/>
<evidence type="ECO:0000305" key="7">
    <source>
    </source>
</evidence>
<evidence type="ECO:0000305" key="8">
    <source>
    </source>
</evidence>
<sequence length="458" mass="47618">MGALGRALLWLQLCALARAAYKLWVPTTDFEAAANWSQNRTPCAGAVVQFPADKAVSVVVRASHGFSDMLLPRDGEFVLASGAGFGAADAGRDPDCGAGAPALFLDPDRFSWHDPRLWRSGDAARGLFSVDAERVPCRHDDVVFPPDASFRVGLGPGARPARVRSVQVLGQTFTRDEDLAAFLASRAGRLRFHGPGALRVGPGACADPSGCVCGDAEVQPWICAALLQPLGGRCPPAACPDALRPEGQCCDLCGAIVSLTHGPTFDIERYRARLLRAFLPQYPGLQAAVSKVRRRPGPHTEVQVVLAETGPQPGGAGRLARALLADVAEHGEALGVLSATARESGAPVGDGSAAGPLGSGSRAGLAGGVAAGLLLLLLALAAGLLLLRRAPRLRWTKRERLVATPVEAPLGFSNPVFDVAGSVGPVPRTPQPPPAQQAGSSSTSRSYFVNPLFAEAEA</sequence>
<keyword id="KW-1003">Cell membrane</keyword>
<keyword id="KW-0168">Coated pit</keyword>
<keyword id="KW-1015">Disulfide bond</keyword>
<keyword id="KW-0967">Endosome</keyword>
<keyword id="KW-0325">Glycoprotein</keyword>
<keyword id="KW-0472">Membrane</keyword>
<keyword id="KW-0653">Protein transport</keyword>
<keyword id="KW-1185">Reference proteome</keyword>
<keyword id="KW-0964">Secreted</keyword>
<keyword id="KW-0732">Signal</keyword>
<keyword id="KW-0812">Transmembrane</keyword>
<keyword id="KW-1133">Transmembrane helix</keyword>
<keyword id="KW-0813">Transport</keyword>
<reference key="1">
    <citation type="journal article" date="2004" name="Blood">
        <title>The functional cobalamin (vitamin B12)-intrinsic factor receptor is a novel complex of cubilin and amnionless.</title>
        <authorList>
            <person name="Fyfe J.C."/>
            <person name="Madsen M."/>
            <person name="Hoejrup P."/>
            <person name="Christensen E.I."/>
            <person name="Tanner S.M."/>
            <person name="de la Chapelle A."/>
            <person name="He Q."/>
            <person name="Moestrup S.K."/>
        </authorList>
    </citation>
    <scope>NUCLEOTIDE SEQUENCE [MRNA]</scope>
</reference>
<reference key="2">
    <citation type="journal article" date="2003" name="Mamm. Genome">
        <title>Canine Imerslund-Grasbeck syndrome maps to a region orthologous to HSA14q.</title>
        <authorList>
            <person name="He Q."/>
            <person name="Fyfe J.C."/>
            <person name="Schaeffer A.A."/>
            <person name="Kilkenney A."/>
            <person name="Werner P."/>
            <person name="Kirkness E.F."/>
            <person name="Henthorn P.S."/>
        </authorList>
    </citation>
    <scope>POSSIBLE INVOLVEMENT IN CANINE MGA1</scope>
</reference>
<reference key="3">
    <citation type="journal article" date="2005" name="Blood">
        <title>Amnionless function is required for cubilin brush-border expression and intrinsic factor-cobalamin (vitamin B12) absorption in vivo.</title>
        <authorList>
            <person name="He Q."/>
            <person name="Madsen M."/>
            <person name="Kilkenney A."/>
            <person name="Gregory B."/>
            <person name="Christensen E.I."/>
            <person name="Vorum H."/>
            <person name="Hoejrup P."/>
            <person name="Schaeffer A.A."/>
            <person name="Kirkness E.F."/>
            <person name="Tanner S.M."/>
            <person name="de la Chapelle A."/>
            <person name="Giger U."/>
            <person name="Moestrup S.K."/>
            <person name="Fyfe J.C."/>
        </authorList>
    </citation>
    <scope>INVOLVEMENT IN CANINE MGA1</scope>
    <scope>FUNCTION</scope>
    <scope>IDENTIFICATION BY MASS SPECTROMETRY</scope>
    <scope>SUBCELLULAR LOCATION</scope>
    <scope>GLYCOSYLATION</scope>
    <scope>TISSUE SPECIFICITY</scope>
</reference>
<gene>
    <name type="primary">AMN</name>
</gene>
<feature type="signal peptide" evidence="2">
    <location>
        <begin position="1"/>
        <end position="19"/>
    </location>
</feature>
<feature type="chain" id="PRO_0000020701" description="Protein amnionless">
    <location>
        <begin position="20"/>
        <end position="458"/>
    </location>
</feature>
<feature type="chain" id="PRO_0000447650" description="Soluble protein amnionless" evidence="6">
    <location>
        <begin position="20"/>
        <end status="unknown"/>
    </location>
</feature>
<feature type="topological domain" description="Extracellular" evidence="3">
    <location>
        <begin position="20"/>
        <end position="366"/>
    </location>
</feature>
<feature type="transmembrane region" description="Helical" evidence="3">
    <location>
        <begin position="367"/>
        <end position="387"/>
    </location>
</feature>
<feature type="topological domain" description="Cytoplasmic" evidence="3">
    <location>
        <begin position="388"/>
        <end position="458"/>
    </location>
</feature>
<feature type="domain" description="VWFC">
    <location>
        <begin position="203"/>
        <end position="254"/>
    </location>
</feature>
<feature type="region of interest" description="Interaction with CUBN" evidence="2">
    <location>
        <begin position="67"/>
        <end position="87"/>
    </location>
</feature>
<feature type="region of interest" description="Disordered" evidence="4">
    <location>
        <begin position="422"/>
        <end position="446"/>
    </location>
</feature>
<feature type="glycosylation site" description="N-linked (GlcNAc...) asparagine" evidence="3">
    <location>
        <position position="35"/>
    </location>
</feature>
<feature type="disulfide bond" evidence="2">
    <location>
        <begin position="43"/>
        <end position="96"/>
    </location>
</feature>
<feature type="disulfide bond" evidence="2">
    <location>
        <begin position="137"/>
        <end position="213"/>
    </location>
</feature>
<feature type="disulfide bond" evidence="2">
    <location>
        <begin position="205"/>
        <end position="211"/>
    </location>
</feature>
<feature type="disulfide bond" evidence="2">
    <location>
        <begin position="223"/>
        <end position="249"/>
    </location>
</feature>
<feature type="disulfide bond" evidence="2">
    <location>
        <begin position="234"/>
        <end position="250"/>
    </location>
</feature>
<feature type="disulfide bond" evidence="2">
    <location>
        <begin position="239"/>
        <end position="253"/>
    </location>
</feature>
<name>AMNLS_CANLF</name>
<proteinExistence type="evidence at protein level"/>
<accession>Q6UKI2</accession>
<comment type="function">
    <text evidence="5">Membrane-bound component of the endocytic receptor formed by AMN and CUBN. Required for normal CUBN glycosylation and trafficking to the cell surface. The complex formed by AMN and CUBN is required for efficient absorption of vitamin B12. Required for normal CUBN-mediated protein transport in the kidney.</text>
</comment>
<comment type="subunit">
    <text evidence="2 5">Interacts (via extracellular region) with CUBN/cubilin (PubMed:15845892). This gives rise to a huge complex containing one AMN chain and three CUBN chains (By similarity).</text>
</comment>
<comment type="subcellular location">
    <subcellularLocation>
        <location evidence="2">Apical cell membrane</location>
        <topology evidence="2">Single-pass type I membrane protein</topology>
    </subcellularLocation>
    <subcellularLocation>
        <location evidence="8">Cell membrane</location>
        <topology evidence="2">Single-pass type I membrane protein</topology>
    </subcellularLocation>
    <subcellularLocation>
        <location evidence="2">Endosome membrane</location>
    </subcellularLocation>
    <subcellularLocation>
        <location evidence="2">Membrane</location>
        <location evidence="2">Coated pit</location>
    </subcellularLocation>
</comment>
<comment type="subcellular location">
    <molecule>Soluble protein amnionless</molecule>
    <subcellularLocation>
        <location evidence="5">Secreted</location>
    </subcellularLocation>
</comment>
<comment type="tissue specificity">
    <text evidence="5">Detected in kidney (at protein level). Detected in kidney and ileum.</text>
</comment>
<comment type="domain">
    <text evidence="1">The complex formed by AMN and CUBN is composed of a 400 Angstrom long stem and a globular crown region. The stem region is probably formed by AMN and the CUBN N-terminal region, including the EGF-like domains. The crown is probably formed by the CUBN CUB domains.</text>
</comment>
<comment type="PTM">
    <text evidence="5">N-glycosylated.</text>
</comment>
<comment type="PTM">
    <text evidence="5">A soluble form arises by proteolytic removal of the membrane anchor.</text>
</comment>
<comment type="disease">
    <text evidence="5 7">Defects in AMN are a cause of a canine form of megaloblastic anemia 1 (MGA1).</text>
</comment>
<comment type="miscellaneous">
    <text evidence="6">The role of Amn in embryonic development seems to be species specific. In mice, null mutations lead to embryonic lethality. Canine mutations give rise to much milder symptoms.</text>
</comment>
<protein>
    <recommendedName>
        <fullName>Protein amnionless</fullName>
    </recommendedName>
    <component>
        <recommendedName>
            <fullName>Soluble protein amnionless</fullName>
        </recommendedName>
    </component>
</protein>